<dbReference type="EC" id="6.3.1.5" evidence="1"/>
<dbReference type="EMBL" id="CP000936">
    <property type="protein sequence ID" value="ACA36829.1"/>
    <property type="molecule type" value="Genomic_DNA"/>
</dbReference>
<dbReference type="RefSeq" id="WP_000058038.1">
    <property type="nucleotide sequence ID" value="NC_010380.1"/>
</dbReference>
<dbReference type="SMR" id="B1ICL9"/>
<dbReference type="KEGG" id="spv:SPH_1550"/>
<dbReference type="HOGENOM" id="CLU_059327_3_0_9"/>
<dbReference type="UniPathway" id="UPA00253">
    <property type="reaction ID" value="UER00333"/>
</dbReference>
<dbReference type="Proteomes" id="UP000002163">
    <property type="component" value="Chromosome"/>
</dbReference>
<dbReference type="GO" id="GO:0005737">
    <property type="term" value="C:cytoplasm"/>
    <property type="evidence" value="ECO:0007669"/>
    <property type="project" value="InterPro"/>
</dbReference>
<dbReference type="GO" id="GO:0005524">
    <property type="term" value="F:ATP binding"/>
    <property type="evidence" value="ECO:0007669"/>
    <property type="project" value="UniProtKB-UniRule"/>
</dbReference>
<dbReference type="GO" id="GO:0004359">
    <property type="term" value="F:glutaminase activity"/>
    <property type="evidence" value="ECO:0007669"/>
    <property type="project" value="InterPro"/>
</dbReference>
<dbReference type="GO" id="GO:0046872">
    <property type="term" value="F:metal ion binding"/>
    <property type="evidence" value="ECO:0007669"/>
    <property type="project" value="UniProtKB-KW"/>
</dbReference>
<dbReference type="GO" id="GO:0003952">
    <property type="term" value="F:NAD+ synthase (glutamine-hydrolyzing) activity"/>
    <property type="evidence" value="ECO:0007669"/>
    <property type="project" value="InterPro"/>
</dbReference>
<dbReference type="GO" id="GO:0008795">
    <property type="term" value="F:NAD+ synthase activity"/>
    <property type="evidence" value="ECO:0007669"/>
    <property type="project" value="UniProtKB-UniRule"/>
</dbReference>
<dbReference type="GO" id="GO:0009435">
    <property type="term" value="P:NAD biosynthetic process"/>
    <property type="evidence" value="ECO:0007669"/>
    <property type="project" value="UniProtKB-UniRule"/>
</dbReference>
<dbReference type="CDD" id="cd00553">
    <property type="entry name" value="NAD_synthase"/>
    <property type="match status" value="1"/>
</dbReference>
<dbReference type="FunFam" id="3.40.50.620:FF:000015">
    <property type="entry name" value="NH(3)-dependent NAD(+) synthetase"/>
    <property type="match status" value="1"/>
</dbReference>
<dbReference type="Gene3D" id="3.40.50.620">
    <property type="entry name" value="HUPs"/>
    <property type="match status" value="1"/>
</dbReference>
<dbReference type="HAMAP" id="MF_00193">
    <property type="entry name" value="NadE_ammonia_dep"/>
    <property type="match status" value="1"/>
</dbReference>
<dbReference type="InterPro" id="IPR022310">
    <property type="entry name" value="NAD/GMP_synthase"/>
</dbReference>
<dbReference type="InterPro" id="IPR003694">
    <property type="entry name" value="NAD_synthase"/>
</dbReference>
<dbReference type="InterPro" id="IPR022926">
    <property type="entry name" value="NH(3)-dep_NAD(+)_synth"/>
</dbReference>
<dbReference type="InterPro" id="IPR014729">
    <property type="entry name" value="Rossmann-like_a/b/a_fold"/>
</dbReference>
<dbReference type="NCBIfam" id="TIGR00552">
    <property type="entry name" value="nadE"/>
    <property type="match status" value="1"/>
</dbReference>
<dbReference type="NCBIfam" id="NF001979">
    <property type="entry name" value="PRK00768.1"/>
    <property type="match status" value="1"/>
</dbReference>
<dbReference type="PANTHER" id="PTHR23090">
    <property type="entry name" value="NH 3 /GLUTAMINE-DEPENDENT NAD + SYNTHETASE"/>
    <property type="match status" value="1"/>
</dbReference>
<dbReference type="PANTHER" id="PTHR23090:SF7">
    <property type="entry name" value="NH(3)-DEPENDENT NAD(+) SYNTHETASE"/>
    <property type="match status" value="1"/>
</dbReference>
<dbReference type="Pfam" id="PF02540">
    <property type="entry name" value="NAD_synthase"/>
    <property type="match status" value="1"/>
</dbReference>
<dbReference type="SUPFAM" id="SSF52402">
    <property type="entry name" value="Adenine nucleotide alpha hydrolases-like"/>
    <property type="match status" value="1"/>
</dbReference>
<proteinExistence type="inferred from homology"/>
<feature type="chain" id="PRO_1000099050" description="NH(3)-dependent NAD(+) synthetase">
    <location>
        <begin position="1"/>
        <end position="274"/>
    </location>
</feature>
<feature type="binding site" evidence="1">
    <location>
        <begin position="46"/>
        <end position="53"/>
    </location>
    <ligand>
        <name>ATP</name>
        <dbReference type="ChEBI" id="CHEBI:30616"/>
    </ligand>
</feature>
<feature type="binding site" evidence="1">
    <location>
        <position position="52"/>
    </location>
    <ligand>
        <name>Mg(2+)</name>
        <dbReference type="ChEBI" id="CHEBI:18420"/>
    </ligand>
</feature>
<feature type="binding site" evidence="1">
    <location>
        <position position="140"/>
    </location>
    <ligand>
        <name>deamido-NAD(+)</name>
        <dbReference type="ChEBI" id="CHEBI:58437"/>
    </ligand>
</feature>
<feature type="binding site" evidence="1">
    <location>
        <position position="160"/>
    </location>
    <ligand>
        <name>ATP</name>
        <dbReference type="ChEBI" id="CHEBI:30616"/>
    </ligand>
</feature>
<feature type="binding site" evidence="1">
    <location>
        <position position="165"/>
    </location>
    <ligand>
        <name>Mg(2+)</name>
        <dbReference type="ChEBI" id="CHEBI:18420"/>
    </ligand>
</feature>
<feature type="binding site" evidence="1">
    <location>
        <position position="173"/>
    </location>
    <ligand>
        <name>deamido-NAD(+)</name>
        <dbReference type="ChEBI" id="CHEBI:58437"/>
    </ligand>
</feature>
<feature type="binding site" evidence="1">
    <location>
        <position position="180"/>
    </location>
    <ligand>
        <name>deamido-NAD(+)</name>
        <dbReference type="ChEBI" id="CHEBI:58437"/>
    </ligand>
</feature>
<feature type="binding site" evidence="1">
    <location>
        <position position="189"/>
    </location>
    <ligand>
        <name>ATP</name>
        <dbReference type="ChEBI" id="CHEBI:30616"/>
    </ligand>
</feature>
<feature type="binding site" evidence="1">
    <location>
        <position position="211"/>
    </location>
    <ligand>
        <name>ATP</name>
        <dbReference type="ChEBI" id="CHEBI:30616"/>
    </ligand>
</feature>
<feature type="binding site" evidence="1">
    <location>
        <begin position="260"/>
        <end position="261"/>
    </location>
    <ligand>
        <name>deamido-NAD(+)</name>
        <dbReference type="ChEBI" id="CHEBI:58437"/>
    </ligand>
</feature>
<reference key="1">
    <citation type="journal article" date="2010" name="Genome Biol.">
        <title>Structure and dynamics of the pan-genome of Streptococcus pneumoniae and closely related species.</title>
        <authorList>
            <person name="Donati C."/>
            <person name="Hiller N.L."/>
            <person name="Tettelin H."/>
            <person name="Muzzi A."/>
            <person name="Croucher N.J."/>
            <person name="Angiuoli S.V."/>
            <person name="Oggioni M."/>
            <person name="Dunning Hotopp J.C."/>
            <person name="Hu F.Z."/>
            <person name="Riley D.R."/>
            <person name="Covacci A."/>
            <person name="Mitchell T.J."/>
            <person name="Bentley S.D."/>
            <person name="Kilian M."/>
            <person name="Ehrlich G.D."/>
            <person name="Rappuoli R."/>
            <person name="Moxon E.R."/>
            <person name="Masignani V."/>
        </authorList>
    </citation>
    <scope>NUCLEOTIDE SEQUENCE [LARGE SCALE GENOMIC DNA]</scope>
    <source>
        <strain>Hungary19A-6</strain>
    </source>
</reference>
<evidence type="ECO:0000255" key="1">
    <source>
        <dbReference type="HAMAP-Rule" id="MF_00193"/>
    </source>
</evidence>
<gene>
    <name evidence="1" type="primary">nadE</name>
    <name type="ordered locus">SPH_1550</name>
</gene>
<comment type="function">
    <text evidence="1">Catalyzes the ATP-dependent amidation of deamido-NAD to form NAD. Uses ammonia as a nitrogen source.</text>
</comment>
<comment type="catalytic activity">
    <reaction evidence="1">
        <text>deamido-NAD(+) + NH4(+) + ATP = AMP + diphosphate + NAD(+) + H(+)</text>
        <dbReference type="Rhea" id="RHEA:21188"/>
        <dbReference type="ChEBI" id="CHEBI:15378"/>
        <dbReference type="ChEBI" id="CHEBI:28938"/>
        <dbReference type="ChEBI" id="CHEBI:30616"/>
        <dbReference type="ChEBI" id="CHEBI:33019"/>
        <dbReference type="ChEBI" id="CHEBI:57540"/>
        <dbReference type="ChEBI" id="CHEBI:58437"/>
        <dbReference type="ChEBI" id="CHEBI:456215"/>
        <dbReference type="EC" id="6.3.1.5"/>
    </reaction>
</comment>
<comment type="pathway">
    <text evidence="1">Cofactor biosynthesis; NAD(+) biosynthesis; NAD(+) from deamido-NAD(+) (ammonia route): step 1/1.</text>
</comment>
<comment type="subunit">
    <text evidence="1">Homodimer.</text>
</comment>
<comment type="similarity">
    <text evidence="1">Belongs to the NAD synthetase family.</text>
</comment>
<organism>
    <name type="scientific">Streptococcus pneumoniae (strain Hungary19A-6)</name>
    <dbReference type="NCBI Taxonomy" id="487214"/>
    <lineage>
        <taxon>Bacteria</taxon>
        <taxon>Bacillati</taxon>
        <taxon>Bacillota</taxon>
        <taxon>Bacilli</taxon>
        <taxon>Lactobacillales</taxon>
        <taxon>Streptococcaceae</taxon>
        <taxon>Streptococcus</taxon>
    </lineage>
</organism>
<keyword id="KW-0067">ATP-binding</keyword>
<keyword id="KW-0436">Ligase</keyword>
<keyword id="KW-0460">Magnesium</keyword>
<keyword id="KW-0479">Metal-binding</keyword>
<keyword id="KW-0520">NAD</keyword>
<keyword id="KW-0547">Nucleotide-binding</keyword>
<accession>B1ICL9</accession>
<sequence length="274" mass="30182">MSLQETIIQELGVKPVIDAQEEIRRSIDFLKRYLKKHPFLKTFVLGISGGQDSTLAGRLAQLAMEELRAETGDDSYKFIAVRLPYGVQADEADAQKALAFIQPDVSLVVNIKESVDAMTAAVEATGSPVSDFNKGNIKARCRMIAQYALAGSHSGAVIGTDHAAENITGFFTKFGDGGADILPLYRLNKRQGKQLLQKLGAEPALYEKIPTADLEEDKPGLADEVALGVTYAEIDDYLEGKTISPEAQATIENWWHKGQHKRRLPITVFDDFWE</sequence>
<name>NADE_STRPI</name>
<protein>
    <recommendedName>
        <fullName evidence="1">NH(3)-dependent NAD(+) synthetase</fullName>
        <ecNumber evidence="1">6.3.1.5</ecNumber>
    </recommendedName>
</protein>